<feature type="chain" id="PRO_0000093031" description="ATP-binding protein Uup-like">
    <location>
        <begin position="1"/>
        <end position="459"/>
    </location>
</feature>
<feature type="domain" description="ABC transporter" evidence="2">
    <location>
        <begin position="132"/>
        <end position="350"/>
    </location>
</feature>
<feature type="region of interest" description="Disordered" evidence="3">
    <location>
        <begin position="357"/>
        <end position="381"/>
    </location>
</feature>
<feature type="compositionally biased region" description="Basic and acidic residues" evidence="3">
    <location>
        <begin position="357"/>
        <end position="375"/>
    </location>
</feature>
<feature type="binding site" evidence="2">
    <location>
        <begin position="164"/>
        <end position="171"/>
    </location>
    <ligand>
        <name>ATP</name>
        <dbReference type="ChEBI" id="CHEBI:30616"/>
    </ligand>
</feature>
<evidence type="ECO:0000250" key="1">
    <source>
        <dbReference type="UniProtKB" id="P43672"/>
    </source>
</evidence>
<evidence type="ECO:0000255" key="2">
    <source>
        <dbReference type="PROSITE-ProRule" id="PRU00434"/>
    </source>
</evidence>
<evidence type="ECO:0000256" key="3">
    <source>
        <dbReference type="SAM" id="MobiDB-lite"/>
    </source>
</evidence>
<evidence type="ECO:0000305" key="4"/>
<dbReference type="EC" id="3.6.1.-" evidence="1"/>
<dbReference type="EMBL" id="L42023">
    <property type="protein sequence ID" value="AAC22987.1"/>
    <property type="molecule type" value="Genomic_DNA"/>
</dbReference>
<dbReference type="PIR" id="B64171">
    <property type="entry name" value="B64171"/>
</dbReference>
<dbReference type="RefSeq" id="NP_439494.1">
    <property type="nucleotide sequence ID" value="NC_000907.1"/>
</dbReference>
<dbReference type="SMR" id="P45167"/>
<dbReference type="STRING" id="71421.HI_1342"/>
<dbReference type="EnsemblBacteria" id="AAC22987">
    <property type="protein sequence ID" value="AAC22987"/>
    <property type="gene ID" value="HI_1342"/>
</dbReference>
<dbReference type="KEGG" id="hin:HI_1342"/>
<dbReference type="PATRIC" id="fig|71421.8.peg.1395"/>
<dbReference type="eggNOG" id="COG0488">
    <property type="taxonomic scope" value="Bacteria"/>
</dbReference>
<dbReference type="HOGENOM" id="CLU_000604_36_2_6"/>
<dbReference type="OrthoDB" id="9762051at2"/>
<dbReference type="PhylomeDB" id="P45167"/>
<dbReference type="BioCyc" id="HINF71421:G1GJ1-1368-MONOMER"/>
<dbReference type="Proteomes" id="UP000000579">
    <property type="component" value="Chromosome"/>
</dbReference>
<dbReference type="GO" id="GO:0005737">
    <property type="term" value="C:cytoplasm"/>
    <property type="evidence" value="ECO:0007669"/>
    <property type="project" value="UniProtKB-SubCell"/>
</dbReference>
<dbReference type="GO" id="GO:0005524">
    <property type="term" value="F:ATP binding"/>
    <property type="evidence" value="ECO:0007669"/>
    <property type="project" value="UniProtKB-KW"/>
</dbReference>
<dbReference type="GO" id="GO:0016887">
    <property type="term" value="F:ATP hydrolysis activity"/>
    <property type="evidence" value="ECO:0007669"/>
    <property type="project" value="InterPro"/>
</dbReference>
<dbReference type="GO" id="GO:0003677">
    <property type="term" value="F:DNA binding"/>
    <property type="evidence" value="ECO:0007669"/>
    <property type="project" value="InterPro"/>
</dbReference>
<dbReference type="CDD" id="cd03221">
    <property type="entry name" value="ABCF_EF-3"/>
    <property type="match status" value="1"/>
</dbReference>
<dbReference type="FunFam" id="3.40.50.300:FF:000309">
    <property type="entry name" value="ABC transporter ATP-binding protein"/>
    <property type="match status" value="1"/>
</dbReference>
<dbReference type="FunFam" id="3.40.50.300:FF:006191">
    <property type="entry name" value="ABC transporter ATP-binding protein uup-2"/>
    <property type="match status" value="1"/>
</dbReference>
<dbReference type="Gene3D" id="3.40.50.300">
    <property type="entry name" value="P-loop containing nucleotide triphosphate hydrolases"/>
    <property type="match status" value="2"/>
</dbReference>
<dbReference type="Gene3D" id="1.10.287.380">
    <property type="entry name" value="Valyl-tRNA synthetase, C-terminal domain"/>
    <property type="match status" value="1"/>
</dbReference>
<dbReference type="InterPro" id="IPR003593">
    <property type="entry name" value="AAA+_ATPase"/>
</dbReference>
<dbReference type="InterPro" id="IPR032524">
    <property type="entry name" value="ABC_tran_C"/>
</dbReference>
<dbReference type="InterPro" id="IPR032781">
    <property type="entry name" value="ABC_tran_Xtn"/>
</dbReference>
<dbReference type="InterPro" id="IPR003439">
    <property type="entry name" value="ABC_transporter-like_ATP-bd"/>
</dbReference>
<dbReference type="InterPro" id="IPR017871">
    <property type="entry name" value="ABC_transporter-like_CS"/>
</dbReference>
<dbReference type="InterPro" id="IPR051309">
    <property type="entry name" value="ABCF_ATPase"/>
</dbReference>
<dbReference type="InterPro" id="IPR027417">
    <property type="entry name" value="P-loop_NTPase"/>
</dbReference>
<dbReference type="InterPro" id="IPR037118">
    <property type="entry name" value="Val-tRNA_synth_C_sf"/>
</dbReference>
<dbReference type="PANTHER" id="PTHR42855">
    <property type="entry name" value="ABC TRANSPORTER ATP-BINDING SUBUNIT"/>
    <property type="match status" value="1"/>
</dbReference>
<dbReference type="PANTHER" id="PTHR42855:SF1">
    <property type="entry name" value="ABC TRANSPORTER DOMAIN-CONTAINING PROTEIN"/>
    <property type="match status" value="1"/>
</dbReference>
<dbReference type="Pfam" id="PF00005">
    <property type="entry name" value="ABC_tran"/>
    <property type="match status" value="1"/>
</dbReference>
<dbReference type="Pfam" id="PF16326">
    <property type="entry name" value="ABC_tran_CTD"/>
    <property type="match status" value="1"/>
</dbReference>
<dbReference type="Pfam" id="PF12848">
    <property type="entry name" value="ABC_tran_Xtn"/>
    <property type="match status" value="1"/>
</dbReference>
<dbReference type="SMART" id="SM00382">
    <property type="entry name" value="AAA"/>
    <property type="match status" value="1"/>
</dbReference>
<dbReference type="SUPFAM" id="SSF52540">
    <property type="entry name" value="P-loop containing nucleoside triphosphate hydrolases"/>
    <property type="match status" value="2"/>
</dbReference>
<dbReference type="PROSITE" id="PS00211">
    <property type="entry name" value="ABC_TRANSPORTER_1"/>
    <property type="match status" value="1"/>
</dbReference>
<dbReference type="PROSITE" id="PS50893">
    <property type="entry name" value="ABC_TRANSPORTER_2"/>
    <property type="match status" value="1"/>
</dbReference>
<protein>
    <recommendedName>
        <fullName>ATP-binding protein Uup-like</fullName>
        <ecNumber evidence="1">3.6.1.-</ecNumber>
    </recommendedName>
</protein>
<gene>
    <name type="primary">uup-B</name>
    <name type="ordered locus">HI_1342</name>
</gene>
<name>UUPL_HAEIN</name>
<sequence>MEAIEWLENFLLDFQGSIVFISHDRSVIRKMATRIVDLDRGQLQSYLGNYDLYLTTKEENLRVEALQNELFDKRLAQEDVWIRQGIKARRTRNEGRVRALKAMREERRQRREVMGTAKLQLDTSSRSGKIVFEMEDVSYEIAGKTLLKDFSTTILRGDKIALVGPNGCGKTTFIKLLLGEIQPTSGKIRCGTKLEIAYFDQYRADLDPEKIVMDNVADGKQDIEINGVKRHVLGYLQEFLFPPKRAMTPVKALSGGERNRLLLAKLLLKPNNLLILDEPTNDLDVETLELLEEILTDYQGTLLIVSHDRQFIDNTATECYLFEGEGRLNKYVGGFFDAKQQQANFWASKAVEEQAKAKKSEPLKEESAVKNDRTSKPKSVKLSYKEQRELEQLPQLLEELETKITTLQAEIADPAFFQQAHDITDAKLKALADTEAELETAFLRWEELEEKKNLADGKA</sequence>
<keyword id="KW-0067">ATP-binding</keyword>
<keyword id="KW-0963">Cytoplasm</keyword>
<keyword id="KW-0378">Hydrolase</keyword>
<keyword id="KW-0547">Nucleotide-binding</keyword>
<keyword id="KW-1185">Reference proteome</keyword>
<proteinExistence type="inferred from homology"/>
<accession>P45167</accession>
<comment type="function">
    <text evidence="4">Might play a role in ribosome assembly or function; this is missing the first ABC transporter domain compared to paralogs.</text>
</comment>
<comment type="catalytic activity">
    <reaction evidence="1">
        <text>ATP + H2O = ADP + phosphate + H(+)</text>
        <dbReference type="Rhea" id="RHEA:13065"/>
        <dbReference type="ChEBI" id="CHEBI:15377"/>
        <dbReference type="ChEBI" id="CHEBI:15378"/>
        <dbReference type="ChEBI" id="CHEBI:30616"/>
        <dbReference type="ChEBI" id="CHEBI:43474"/>
        <dbReference type="ChEBI" id="CHEBI:456216"/>
    </reaction>
</comment>
<comment type="subcellular location">
    <subcellularLocation>
        <location evidence="1">Cytoplasm</location>
    </subcellularLocation>
</comment>
<comment type="similarity">
    <text evidence="4">Belongs to the ABC transporter superfamily. ABCF family. Uup subfamily.</text>
</comment>
<organism>
    <name type="scientific">Haemophilus influenzae (strain ATCC 51907 / DSM 11121 / KW20 / Rd)</name>
    <dbReference type="NCBI Taxonomy" id="71421"/>
    <lineage>
        <taxon>Bacteria</taxon>
        <taxon>Pseudomonadati</taxon>
        <taxon>Pseudomonadota</taxon>
        <taxon>Gammaproteobacteria</taxon>
        <taxon>Pasteurellales</taxon>
        <taxon>Pasteurellaceae</taxon>
        <taxon>Haemophilus</taxon>
    </lineage>
</organism>
<reference key="1">
    <citation type="journal article" date="1995" name="Science">
        <title>Whole-genome random sequencing and assembly of Haemophilus influenzae Rd.</title>
        <authorList>
            <person name="Fleischmann R.D."/>
            <person name="Adams M.D."/>
            <person name="White O."/>
            <person name="Clayton R.A."/>
            <person name="Kirkness E.F."/>
            <person name="Kerlavage A.R."/>
            <person name="Bult C.J."/>
            <person name="Tomb J.-F."/>
            <person name="Dougherty B.A."/>
            <person name="Merrick J.M."/>
            <person name="McKenney K."/>
            <person name="Sutton G.G."/>
            <person name="FitzHugh W."/>
            <person name="Fields C.A."/>
            <person name="Gocayne J.D."/>
            <person name="Scott J.D."/>
            <person name="Shirley R."/>
            <person name="Liu L.-I."/>
            <person name="Glodek A."/>
            <person name="Kelley J.M."/>
            <person name="Weidman J.F."/>
            <person name="Phillips C.A."/>
            <person name="Spriggs T."/>
            <person name="Hedblom E."/>
            <person name="Cotton M.D."/>
            <person name="Utterback T.R."/>
            <person name="Hanna M.C."/>
            <person name="Nguyen D.T."/>
            <person name="Saudek D.M."/>
            <person name="Brandon R.C."/>
            <person name="Fine L.D."/>
            <person name="Fritchman J.L."/>
            <person name="Fuhrmann J.L."/>
            <person name="Geoghagen N.S.M."/>
            <person name="Gnehm C.L."/>
            <person name="McDonald L.A."/>
            <person name="Small K.V."/>
            <person name="Fraser C.M."/>
            <person name="Smith H.O."/>
            <person name="Venter J.C."/>
        </authorList>
    </citation>
    <scope>NUCLEOTIDE SEQUENCE [LARGE SCALE GENOMIC DNA]</scope>
    <source>
        <strain>ATCC 51907 / DSM 11121 / KW20 / Rd</strain>
    </source>
</reference>